<accession>Q9CF36</accession>
<feature type="chain" id="PRO_1000093367" description="Endonuclease MutS2">
    <location>
        <begin position="1"/>
        <end position="776"/>
    </location>
</feature>
<feature type="domain" description="Smr" evidence="1">
    <location>
        <begin position="701"/>
        <end position="776"/>
    </location>
</feature>
<feature type="binding site" evidence="1">
    <location>
        <begin position="330"/>
        <end position="337"/>
    </location>
    <ligand>
        <name>ATP</name>
        <dbReference type="ChEBI" id="CHEBI:30616"/>
    </ligand>
</feature>
<reference key="1">
    <citation type="journal article" date="2001" name="Genome Res.">
        <title>The complete genome sequence of the lactic acid bacterium Lactococcus lactis ssp. lactis IL1403.</title>
        <authorList>
            <person name="Bolotin A."/>
            <person name="Wincker P."/>
            <person name="Mauger S."/>
            <person name="Jaillon O."/>
            <person name="Malarme K."/>
            <person name="Weissenbach J."/>
            <person name="Ehrlich S.D."/>
            <person name="Sorokin A."/>
        </authorList>
    </citation>
    <scope>NUCLEOTIDE SEQUENCE [LARGE SCALE GENOMIC DNA]</scope>
    <source>
        <strain>IL1403</strain>
    </source>
</reference>
<evidence type="ECO:0000255" key="1">
    <source>
        <dbReference type="HAMAP-Rule" id="MF_00092"/>
    </source>
</evidence>
<proteinExistence type="inferred from homology"/>
<dbReference type="EC" id="3.1.-.-" evidence="1"/>
<dbReference type="EC" id="3.6.4.-" evidence="1"/>
<dbReference type="EMBL" id="AE005176">
    <property type="protein sequence ID" value="AAK05743.1"/>
    <property type="molecule type" value="Genomic_DNA"/>
</dbReference>
<dbReference type="PIR" id="E86830">
    <property type="entry name" value="E86830"/>
</dbReference>
<dbReference type="RefSeq" id="NP_267801.1">
    <property type="nucleotide sequence ID" value="NC_002662.1"/>
</dbReference>
<dbReference type="RefSeq" id="WP_003129443.1">
    <property type="nucleotide sequence ID" value="NC_002662.1"/>
</dbReference>
<dbReference type="SMR" id="Q9CF36"/>
<dbReference type="PaxDb" id="272623-L0293"/>
<dbReference type="EnsemblBacteria" id="AAK05743">
    <property type="protein sequence ID" value="AAK05743"/>
    <property type="gene ID" value="L0293"/>
</dbReference>
<dbReference type="KEGG" id="lla:L0293"/>
<dbReference type="PATRIC" id="fig|272623.7.peg.1767"/>
<dbReference type="eggNOG" id="COG1193">
    <property type="taxonomic scope" value="Bacteria"/>
</dbReference>
<dbReference type="HOGENOM" id="CLU_011252_2_1_9"/>
<dbReference type="OrthoDB" id="9808166at2"/>
<dbReference type="Proteomes" id="UP000002196">
    <property type="component" value="Chromosome"/>
</dbReference>
<dbReference type="GO" id="GO:0005524">
    <property type="term" value="F:ATP binding"/>
    <property type="evidence" value="ECO:0007669"/>
    <property type="project" value="UniProtKB-UniRule"/>
</dbReference>
<dbReference type="GO" id="GO:0016887">
    <property type="term" value="F:ATP hydrolysis activity"/>
    <property type="evidence" value="ECO:0007669"/>
    <property type="project" value="InterPro"/>
</dbReference>
<dbReference type="GO" id="GO:0140664">
    <property type="term" value="F:ATP-dependent DNA damage sensor activity"/>
    <property type="evidence" value="ECO:0007669"/>
    <property type="project" value="InterPro"/>
</dbReference>
<dbReference type="GO" id="GO:0004519">
    <property type="term" value="F:endonuclease activity"/>
    <property type="evidence" value="ECO:0007669"/>
    <property type="project" value="UniProtKB-UniRule"/>
</dbReference>
<dbReference type="GO" id="GO:0030983">
    <property type="term" value="F:mismatched DNA binding"/>
    <property type="evidence" value="ECO:0007669"/>
    <property type="project" value="InterPro"/>
</dbReference>
<dbReference type="GO" id="GO:0043023">
    <property type="term" value="F:ribosomal large subunit binding"/>
    <property type="evidence" value="ECO:0007669"/>
    <property type="project" value="UniProtKB-UniRule"/>
</dbReference>
<dbReference type="GO" id="GO:0019843">
    <property type="term" value="F:rRNA binding"/>
    <property type="evidence" value="ECO:0007669"/>
    <property type="project" value="UniProtKB-UniRule"/>
</dbReference>
<dbReference type="GO" id="GO:0006298">
    <property type="term" value="P:mismatch repair"/>
    <property type="evidence" value="ECO:0007669"/>
    <property type="project" value="InterPro"/>
</dbReference>
<dbReference type="GO" id="GO:0045910">
    <property type="term" value="P:negative regulation of DNA recombination"/>
    <property type="evidence" value="ECO:0007669"/>
    <property type="project" value="InterPro"/>
</dbReference>
<dbReference type="GO" id="GO:0072344">
    <property type="term" value="P:rescue of stalled ribosome"/>
    <property type="evidence" value="ECO:0007669"/>
    <property type="project" value="UniProtKB-UniRule"/>
</dbReference>
<dbReference type="CDD" id="cd03280">
    <property type="entry name" value="ABC_MutS2"/>
    <property type="match status" value="1"/>
</dbReference>
<dbReference type="FunFam" id="3.40.50.300:FF:000830">
    <property type="entry name" value="Endonuclease MutS2"/>
    <property type="match status" value="1"/>
</dbReference>
<dbReference type="Gene3D" id="3.30.1370.110">
    <property type="match status" value="1"/>
</dbReference>
<dbReference type="Gene3D" id="3.40.50.300">
    <property type="entry name" value="P-loop containing nucleotide triphosphate hydrolases"/>
    <property type="match status" value="1"/>
</dbReference>
<dbReference type="HAMAP" id="MF_00092">
    <property type="entry name" value="MutS2"/>
    <property type="match status" value="1"/>
</dbReference>
<dbReference type="InterPro" id="IPR000432">
    <property type="entry name" value="DNA_mismatch_repair_MutS_C"/>
</dbReference>
<dbReference type="InterPro" id="IPR007696">
    <property type="entry name" value="DNA_mismatch_repair_MutS_core"/>
</dbReference>
<dbReference type="InterPro" id="IPR036187">
    <property type="entry name" value="DNA_mismatch_repair_MutS_sf"/>
</dbReference>
<dbReference type="InterPro" id="IPR046893">
    <property type="entry name" value="MSSS"/>
</dbReference>
<dbReference type="InterPro" id="IPR045076">
    <property type="entry name" value="MutS"/>
</dbReference>
<dbReference type="InterPro" id="IPR005747">
    <property type="entry name" value="MutS2"/>
</dbReference>
<dbReference type="InterPro" id="IPR027417">
    <property type="entry name" value="P-loop_NTPase"/>
</dbReference>
<dbReference type="InterPro" id="IPR002625">
    <property type="entry name" value="Smr_dom"/>
</dbReference>
<dbReference type="InterPro" id="IPR036063">
    <property type="entry name" value="Smr_dom_sf"/>
</dbReference>
<dbReference type="NCBIfam" id="TIGR01069">
    <property type="entry name" value="mutS2"/>
    <property type="match status" value="1"/>
</dbReference>
<dbReference type="PANTHER" id="PTHR48466:SF2">
    <property type="entry name" value="OS10G0509000 PROTEIN"/>
    <property type="match status" value="1"/>
</dbReference>
<dbReference type="PANTHER" id="PTHR48466">
    <property type="entry name" value="OS10G0509000 PROTEIN-RELATED"/>
    <property type="match status" value="1"/>
</dbReference>
<dbReference type="Pfam" id="PF20297">
    <property type="entry name" value="MSSS"/>
    <property type="match status" value="1"/>
</dbReference>
<dbReference type="Pfam" id="PF00488">
    <property type="entry name" value="MutS_V"/>
    <property type="match status" value="1"/>
</dbReference>
<dbReference type="Pfam" id="PF01713">
    <property type="entry name" value="Smr"/>
    <property type="match status" value="1"/>
</dbReference>
<dbReference type="PIRSF" id="PIRSF005814">
    <property type="entry name" value="MutS_YshD"/>
    <property type="match status" value="1"/>
</dbReference>
<dbReference type="SMART" id="SM00534">
    <property type="entry name" value="MUTSac"/>
    <property type="match status" value="1"/>
</dbReference>
<dbReference type="SMART" id="SM00533">
    <property type="entry name" value="MUTSd"/>
    <property type="match status" value="1"/>
</dbReference>
<dbReference type="SMART" id="SM00463">
    <property type="entry name" value="SMR"/>
    <property type="match status" value="1"/>
</dbReference>
<dbReference type="SUPFAM" id="SSF48334">
    <property type="entry name" value="DNA repair protein MutS, domain III"/>
    <property type="match status" value="1"/>
</dbReference>
<dbReference type="SUPFAM" id="SSF52540">
    <property type="entry name" value="P-loop containing nucleoside triphosphate hydrolases"/>
    <property type="match status" value="1"/>
</dbReference>
<dbReference type="SUPFAM" id="SSF160443">
    <property type="entry name" value="SMR domain-like"/>
    <property type="match status" value="1"/>
</dbReference>
<dbReference type="PROSITE" id="PS00486">
    <property type="entry name" value="DNA_MISMATCH_REPAIR_2"/>
    <property type="match status" value="1"/>
</dbReference>
<dbReference type="PROSITE" id="PS50828">
    <property type="entry name" value="SMR"/>
    <property type="match status" value="1"/>
</dbReference>
<comment type="function">
    <text evidence="1">Endonuclease that is involved in the suppression of homologous recombination and thus may have a key role in the control of bacterial genetic diversity.</text>
</comment>
<comment type="function">
    <text evidence="1">Acts as a ribosome collision sensor, splitting the ribosome into its 2 subunits. Detects stalled/collided 70S ribosomes which it binds and splits by an ATP-hydrolysis driven conformational change. Acts upstream of the ribosome quality control system (RQC), a ribosome-associated complex that mediates the extraction of incompletely synthesized nascent chains from stalled ribosomes and their subsequent degradation. Probably generates substrates for RQC.</text>
</comment>
<comment type="subunit">
    <text evidence="1">Homodimer. Binds to stalled ribosomes, contacting rRNA.</text>
</comment>
<comment type="similarity">
    <text evidence="1">Belongs to the DNA mismatch repair MutS family. MutS2 subfamily.</text>
</comment>
<name>MUTS2_LACLA</name>
<organism>
    <name type="scientific">Lactococcus lactis subsp. lactis (strain IL1403)</name>
    <name type="common">Streptococcus lactis</name>
    <dbReference type="NCBI Taxonomy" id="272623"/>
    <lineage>
        <taxon>Bacteria</taxon>
        <taxon>Bacillati</taxon>
        <taxon>Bacillota</taxon>
        <taxon>Bacilli</taxon>
        <taxon>Lactobacillales</taxon>
        <taxon>Streptococcaceae</taxon>
        <taxon>Lactococcus</taxon>
    </lineage>
</organism>
<keyword id="KW-0067">ATP-binding</keyword>
<keyword id="KW-0238">DNA-binding</keyword>
<keyword id="KW-0255">Endonuclease</keyword>
<keyword id="KW-0378">Hydrolase</keyword>
<keyword id="KW-0540">Nuclease</keyword>
<keyword id="KW-0547">Nucleotide-binding</keyword>
<keyword id="KW-1185">Reference proteome</keyword>
<keyword id="KW-0694">RNA-binding</keyword>
<keyword id="KW-0699">rRNA-binding</keyword>
<protein>
    <recommendedName>
        <fullName evidence="1">Endonuclease MutS2</fullName>
        <ecNumber evidence="1">3.1.-.-</ecNumber>
    </recommendedName>
    <alternativeName>
        <fullName evidence="1">Ribosome-associated protein quality control-upstream factor</fullName>
        <shortName evidence="1">RQC-upstream factor</shortName>
        <shortName evidence="1">RqcU</shortName>
        <ecNumber evidence="1">3.6.4.-</ecNumber>
    </alternativeName>
</protein>
<sequence>MNKKILQILEYDKVKEQFMNALTTAQGQQELKDLKPLTDKEKIQLLFDEVADFRLLTQENGLLNLGKTNDLTEILRRLELEASLSGKEFVEIKKVIQLGINIQRFFDEAENVETPSLAITLEKLVDLSALVKKLEIFDNAGSLYDNASLELMHIRASIKSHQSEIRKIMQEMLTKNLSSLSENVITIRNDRQVLPVKAENKNKIAGVVHDMSASGQTLYIEPNAVVSLNNKLNQKRIEERQEITRIYRELASQLKPYSFDIRQNAWLIGHIDFVRAKYLYLAANKATLPELTTDKDITLFAARHPLIEAKIVVTNDIKFDAGLNTIVITGPNTGGKTITLKTVGLLTILAQSGLPILAADGSRIHLFDDIFADIGDEQSIEQSLSTFSSHMTNIVHILAQADENSLVLFDELGAGTDPKEGAALAIAILENLRERNVKTMASTHYPELKAYGVETQRVINASMEFNIDKMQPTYHLQLGVPGRSNALEISRRLGLPETIISVASQQISDSEHDVNQMIEKLEEKTREVIESSRNIKKIERENQSLHKDLTKVYNQINREREFELEKAQKEAQEVVKKASLEAQEILKNLNDKAALKPHEIIAARKELEGLAPTIDFSKNKVLKKAKAQRGLKQGAEVNVTSYGQRGKLIRLEKDGRWTVQMGSITTRLNEDEFEVIESPEQIQAKTKNVSKKVTSKVKAQLDLRGMRYEEAELELDNYIDQALLANLIQITIVHGIGTGVIREMVQKKLQKHRHIKSYEYAPINAGGSGATIAILK</sequence>
<gene>
    <name evidence="1" type="primary">mutS2</name>
    <name evidence="1" type="synonym">rqcU</name>
    <name type="ordered locus">LL1645</name>
    <name type="ORF">L0293</name>
</gene>